<sequence length="57" mass="6485">MAVPKRRTSKTRKNKRRTHFKISVPGMTECPNCGEYKLSHRVCKNCGSYNGEEVAAK</sequence>
<feature type="chain" id="PRO_1000005082" description="Large ribosomal subunit protein bL32">
    <location>
        <begin position="1"/>
        <end position="57"/>
    </location>
</feature>
<organism>
    <name type="scientific">Staphylococcus aureus (strain Mu3 / ATCC 700698)</name>
    <dbReference type="NCBI Taxonomy" id="418127"/>
    <lineage>
        <taxon>Bacteria</taxon>
        <taxon>Bacillati</taxon>
        <taxon>Bacillota</taxon>
        <taxon>Bacilli</taxon>
        <taxon>Bacillales</taxon>
        <taxon>Staphylococcaceae</taxon>
        <taxon>Staphylococcus</taxon>
    </lineage>
</organism>
<proteinExistence type="inferred from homology"/>
<comment type="similarity">
    <text evidence="1">Belongs to the bacterial ribosomal protein bL32 family.</text>
</comment>
<name>RL32_STAA1</name>
<gene>
    <name evidence="1" type="primary">rpmF</name>
    <name type="ordered locus">SAHV_1119</name>
</gene>
<protein>
    <recommendedName>
        <fullName evidence="1">Large ribosomal subunit protein bL32</fullName>
    </recommendedName>
    <alternativeName>
        <fullName evidence="2">50S ribosomal protein L32</fullName>
    </alternativeName>
</protein>
<reference key="1">
    <citation type="journal article" date="2008" name="Antimicrob. Agents Chemother.">
        <title>Mutated response regulator graR is responsible for phenotypic conversion of Staphylococcus aureus from heterogeneous vancomycin-intermediate resistance to vancomycin-intermediate resistance.</title>
        <authorList>
            <person name="Neoh H.-M."/>
            <person name="Cui L."/>
            <person name="Yuzawa H."/>
            <person name="Takeuchi F."/>
            <person name="Matsuo M."/>
            <person name="Hiramatsu K."/>
        </authorList>
    </citation>
    <scope>NUCLEOTIDE SEQUENCE [LARGE SCALE GENOMIC DNA]</scope>
    <source>
        <strain>Mu3 / ATCC 700698</strain>
    </source>
</reference>
<evidence type="ECO:0000255" key="1">
    <source>
        <dbReference type="HAMAP-Rule" id="MF_00340"/>
    </source>
</evidence>
<evidence type="ECO:0000305" key="2"/>
<accession>A7X145</accession>
<keyword id="KW-0687">Ribonucleoprotein</keyword>
<keyword id="KW-0689">Ribosomal protein</keyword>
<dbReference type="EMBL" id="AP009324">
    <property type="protein sequence ID" value="BAF78002.1"/>
    <property type="molecule type" value="Genomic_DNA"/>
</dbReference>
<dbReference type="RefSeq" id="WP_000290472.1">
    <property type="nucleotide sequence ID" value="NZ_CTYB01000001.1"/>
</dbReference>
<dbReference type="EMDB" id="EMD-8402"/>
<dbReference type="SMR" id="A7X145"/>
<dbReference type="GeneID" id="98345444"/>
<dbReference type="KEGG" id="saw:SAHV_1119"/>
<dbReference type="HOGENOM" id="CLU_129084_1_3_9"/>
<dbReference type="GO" id="GO:0015934">
    <property type="term" value="C:large ribosomal subunit"/>
    <property type="evidence" value="ECO:0007669"/>
    <property type="project" value="InterPro"/>
</dbReference>
<dbReference type="GO" id="GO:0003735">
    <property type="term" value="F:structural constituent of ribosome"/>
    <property type="evidence" value="ECO:0007669"/>
    <property type="project" value="InterPro"/>
</dbReference>
<dbReference type="GO" id="GO:0006412">
    <property type="term" value="P:translation"/>
    <property type="evidence" value="ECO:0007669"/>
    <property type="project" value="UniProtKB-UniRule"/>
</dbReference>
<dbReference type="Gene3D" id="1.20.5.640">
    <property type="entry name" value="Single helix bin"/>
    <property type="match status" value="1"/>
</dbReference>
<dbReference type="HAMAP" id="MF_00340">
    <property type="entry name" value="Ribosomal_bL32"/>
    <property type="match status" value="1"/>
</dbReference>
<dbReference type="InterPro" id="IPR002677">
    <property type="entry name" value="Ribosomal_bL32"/>
</dbReference>
<dbReference type="InterPro" id="IPR044957">
    <property type="entry name" value="Ribosomal_bL32_bact"/>
</dbReference>
<dbReference type="InterPro" id="IPR011332">
    <property type="entry name" value="Ribosomal_zn-bd"/>
</dbReference>
<dbReference type="NCBIfam" id="TIGR01031">
    <property type="entry name" value="rpmF_bact"/>
    <property type="match status" value="1"/>
</dbReference>
<dbReference type="PANTHER" id="PTHR35534">
    <property type="entry name" value="50S RIBOSOMAL PROTEIN L32"/>
    <property type="match status" value="1"/>
</dbReference>
<dbReference type="PANTHER" id="PTHR35534:SF2">
    <property type="entry name" value="LARGE RIBOSOMAL SUBUNIT PROTEIN BL32"/>
    <property type="match status" value="1"/>
</dbReference>
<dbReference type="Pfam" id="PF01783">
    <property type="entry name" value="Ribosomal_L32p"/>
    <property type="match status" value="1"/>
</dbReference>
<dbReference type="SUPFAM" id="SSF57829">
    <property type="entry name" value="Zn-binding ribosomal proteins"/>
    <property type="match status" value="1"/>
</dbReference>